<feature type="chain" id="PRO_1000016634" description="tRNA uridine 5-carboxymethylaminomethyl modification enzyme MnmG">
    <location>
        <begin position="1"/>
        <end position="619"/>
    </location>
</feature>
<feature type="binding site" evidence="1">
    <location>
        <begin position="10"/>
        <end position="15"/>
    </location>
    <ligand>
        <name>FAD</name>
        <dbReference type="ChEBI" id="CHEBI:57692"/>
    </ligand>
</feature>
<feature type="binding site" evidence="1">
    <location>
        <begin position="269"/>
        <end position="283"/>
    </location>
    <ligand>
        <name>NAD(+)</name>
        <dbReference type="ChEBI" id="CHEBI:57540"/>
    </ligand>
</feature>
<dbReference type="EMBL" id="CP000489">
    <property type="protein sequence ID" value="ABL68121.1"/>
    <property type="molecule type" value="Genomic_DNA"/>
</dbReference>
<dbReference type="RefSeq" id="WP_011746354.1">
    <property type="nucleotide sequence ID" value="NC_008686.1"/>
</dbReference>
<dbReference type="SMR" id="A1AXX7"/>
<dbReference type="STRING" id="318586.Pden_0004"/>
<dbReference type="EnsemblBacteria" id="ABL68121">
    <property type="protein sequence ID" value="ABL68121"/>
    <property type="gene ID" value="Pden_0004"/>
</dbReference>
<dbReference type="GeneID" id="93451235"/>
<dbReference type="KEGG" id="pde:Pden_0004"/>
<dbReference type="eggNOG" id="COG0445">
    <property type="taxonomic scope" value="Bacteria"/>
</dbReference>
<dbReference type="HOGENOM" id="CLU_007831_2_2_5"/>
<dbReference type="OrthoDB" id="9815560at2"/>
<dbReference type="Proteomes" id="UP000000361">
    <property type="component" value="Chromosome 1"/>
</dbReference>
<dbReference type="GO" id="GO:0005829">
    <property type="term" value="C:cytosol"/>
    <property type="evidence" value="ECO:0007669"/>
    <property type="project" value="TreeGrafter"/>
</dbReference>
<dbReference type="GO" id="GO:0050660">
    <property type="term" value="F:flavin adenine dinucleotide binding"/>
    <property type="evidence" value="ECO:0007669"/>
    <property type="project" value="UniProtKB-UniRule"/>
</dbReference>
<dbReference type="GO" id="GO:0030488">
    <property type="term" value="P:tRNA methylation"/>
    <property type="evidence" value="ECO:0007669"/>
    <property type="project" value="TreeGrafter"/>
</dbReference>
<dbReference type="GO" id="GO:0002098">
    <property type="term" value="P:tRNA wobble uridine modification"/>
    <property type="evidence" value="ECO:0007669"/>
    <property type="project" value="InterPro"/>
</dbReference>
<dbReference type="FunFam" id="1.10.150.570:FF:000001">
    <property type="entry name" value="tRNA uridine 5-carboxymethylaminomethyl modification enzyme MnmG"/>
    <property type="match status" value="1"/>
</dbReference>
<dbReference type="FunFam" id="3.50.50.60:FF:000002">
    <property type="entry name" value="tRNA uridine 5-carboxymethylaminomethyl modification enzyme MnmG"/>
    <property type="match status" value="1"/>
</dbReference>
<dbReference type="Gene3D" id="3.50.50.60">
    <property type="entry name" value="FAD/NAD(P)-binding domain"/>
    <property type="match status" value="2"/>
</dbReference>
<dbReference type="Gene3D" id="1.10.150.570">
    <property type="entry name" value="GidA associated domain, C-terminal subdomain"/>
    <property type="match status" value="1"/>
</dbReference>
<dbReference type="HAMAP" id="MF_00129">
    <property type="entry name" value="MnmG_GidA"/>
    <property type="match status" value="1"/>
</dbReference>
<dbReference type="InterPro" id="IPR036188">
    <property type="entry name" value="FAD/NAD-bd_sf"/>
</dbReference>
<dbReference type="InterPro" id="IPR049312">
    <property type="entry name" value="GIDA_C_N"/>
</dbReference>
<dbReference type="InterPro" id="IPR004416">
    <property type="entry name" value="MnmG"/>
</dbReference>
<dbReference type="InterPro" id="IPR002218">
    <property type="entry name" value="MnmG-rel"/>
</dbReference>
<dbReference type="InterPro" id="IPR020595">
    <property type="entry name" value="MnmG-rel_CS"/>
</dbReference>
<dbReference type="InterPro" id="IPR026904">
    <property type="entry name" value="MnmG_C"/>
</dbReference>
<dbReference type="InterPro" id="IPR047001">
    <property type="entry name" value="MnmG_C_subdom"/>
</dbReference>
<dbReference type="InterPro" id="IPR044920">
    <property type="entry name" value="MnmG_C_subdom_sf"/>
</dbReference>
<dbReference type="InterPro" id="IPR040131">
    <property type="entry name" value="MnmG_N"/>
</dbReference>
<dbReference type="NCBIfam" id="TIGR00136">
    <property type="entry name" value="mnmG_gidA"/>
    <property type="match status" value="1"/>
</dbReference>
<dbReference type="PANTHER" id="PTHR11806">
    <property type="entry name" value="GLUCOSE INHIBITED DIVISION PROTEIN A"/>
    <property type="match status" value="1"/>
</dbReference>
<dbReference type="PANTHER" id="PTHR11806:SF0">
    <property type="entry name" value="PROTEIN MTO1 HOMOLOG, MITOCHONDRIAL"/>
    <property type="match status" value="1"/>
</dbReference>
<dbReference type="Pfam" id="PF01134">
    <property type="entry name" value="GIDA"/>
    <property type="match status" value="1"/>
</dbReference>
<dbReference type="Pfam" id="PF21680">
    <property type="entry name" value="GIDA_C_1st"/>
    <property type="match status" value="1"/>
</dbReference>
<dbReference type="Pfam" id="PF13932">
    <property type="entry name" value="SAM_GIDA_C"/>
    <property type="match status" value="1"/>
</dbReference>
<dbReference type="PRINTS" id="PR00368">
    <property type="entry name" value="FADPNR"/>
</dbReference>
<dbReference type="SMART" id="SM01228">
    <property type="entry name" value="GIDA_assoc_3"/>
    <property type="match status" value="1"/>
</dbReference>
<dbReference type="SUPFAM" id="SSF51905">
    <property type="entry name" value="FAD/NAD(P)-binding domain"/>
    <property type="match status" value="1"/>
</dbReference>
<dbReference type="PROSITE" id="PS01280">
    <property type="entry name" value="GIDA_1"/>
    <property type="match status" value="1"/>
</dbReference>
<dbReference type="PROSITE" id="PS01281">
    <property type="entry name" value="GIDA_2"/>
    <property type="match status" value="1"/>
</dbReference>
<accession>A1AXX7</accession>
<sequence>MKQFDVIVIGGGHAGVEAAMAAARMGVKTALVTLHRDDIGTMSCNPAIGGLGKGHLVREIDALDGVMGKLADTAGIQFRLLNRRKGPAVQGPRAQADRKLYRSAAAKIVAGQDGLSLILGEAAELLHERGQVTGLRLADDSELQARQIILTTGTFLNGLIHIGEISRQAGRWGGSTSVTLAASLRPLNLPLGRLKTGTPPRILRQSIDWESLHQQPGDEEPVMFSYLNTVPEAPQVSCAITHTNPDTHRIIRENLARSAMYGGRIDGVGPRYCPSIEDKVVRFADKESHQIFLEPEGLDSDLVYPNGISTSLPEDIQLAYVRSIRGLERAQIAQPGYAVEYDYVDPRALAASLEVKNLSGLFLAGQINGTTGYEEAAAQGLVAGLNAALKAQGREALHFSRSQSYIGVMIDDLTTRGVSEPYRMFTSRAEFRLSLRADNADQRLTPFGIDIGCVGQERRAAFSEKMRRYTAARDRAESVSFTPTELSRSGIEVRHDGARRSLFALLAQQEIPQDQVLALDDQLVLQDPAIIRQLATDALYHQYTDRQGKDAELLRKEEAVAIPAEFDYDALSGLSNELKFKLNQHRPATLAAAANIEGMTPAALTLILAVIRAGNRRSA</sequence>
<reference key="1">
    <citation type="submission" date="2006-12" db="EMBL/GenBank/DDBJ databases">
        <title>Complete sequence of chromosome 1 of Paracoccus denitrificans PD1222.</title>
        <authorList>
            <person name="Copeland A."/>
            <person name="Lucas S."/>
            <person name="Lapidus A."/>
            <person name="Barry K."/>
            <person name="Detter J.C."/>
            <person name="Glavina del Rio T."/>
            <person name="Hammon N."/>
            <person name="Israni S."/>
            <person name="Dalin E."/>
            <person name="Tice H."/>
            <person name="Pitluck S."/>
            <person name="Munk A.C."/>
            <person name="Brettin T."/>
            <person name="Bruce D."/>
            <person name="Han C."/>
            <person name="Tapia R."/>
            <person name="Gilna P."/>
            <person name="Schmutz J."/>
            <person name="Larimer F."/>
            <person name="Land M."/>
            <person name="Hauser L."/>
            <person name="Kyrpides N."/>
            <person name="Lykidis A."/>
            <person name="Spiro S."/>
            <person name="Richardson D.J."/>
            <person name="Moir J.W.B."/>
            <person name="Ferguson S.J."/>
            <person name="van Spanning R.J.M."/>
            <person name="Richardson P."/>
        </authorList>
    </citation>
    <scope>NUCLEOTIDE SEQUENCE [LARGE SCALE GENOMIC DNA]</scope>
    <source>
        <strain>Pd 1222</strain>
    </source>
</reference>
<gene>
    <name evidence="1" type="primary">mnmG</name>
    <name evidence="1" type="synonym">gidA</name>
    <name type="ordered locus">Pden_0004</name>
</gene>
<organism>
    <name type="scientific">Paracoccus denitrificans (strain Pd 1222)</name>
    <dbReference type="NCBI Taxonomy" id="318586"/>
    <lineage>
        <taxon>Bacteria</taxon>
        <taxon>Pseudomonadati</taxon>
        <taxon>Pseudomonadota</taxon>
        <taxon>Alphaproteobacteria</taxon>
        <taxon>Rhodobacterales</taxon>
        <taxon>Paracoccaceae</taxon>
        <taxon>Paracoccus</taxon>
    </lineage>
</organism>
<comment type="function">
    <text evidence="1">NAD-binding protein involved in the addition of a carboxymethylaminomethyl (cmnm) group at the wobble position (U34) of certain tRNAs, forming tRNA-cmnm(5)s(2)U34.</text>
</comment>
<comment type="cofactor">
    <cofactor evidence="1">
        <name>FAD</name>
        <dbReference type="ChEBI" id="CHEBI:57692"/>
    </cofactor>
</comment>
<comment type="subunit">
    <text evidence="1">Homodimer. Heterotetramer of two MnmE and two MnmG subunits.</text>
</comment>
<comment type="subcellular location">
    <subcellularLocation>
        <location evidence="1">Cytoplasm</location>
    </subcellularLocation>
</comment>
<comment type="similarity">
    <text evidence="1">Belongs to the MnmG family.</text>
</comment>
<keyword id="KW-0963">Cytoplasm</keyword>
<keyword id="KW-0274">FAD</keyword>
<keyword id="KW-0285">Flavoprotein</keyword>
<keyword id="KW-0520">NAD</keyword>
<keyword id="KW-1185">Reference proteome</keyword>
<keyword id="KW-0819">tRNA processing</keyword>
<name>MNMG_PARDP</name>
<protein>
    <recommendedName>
        <fullName evidence="1">tRNA uridine 5-carboxymethylaminomethyl modification enzyme MnmG</fullName>
    </recommendedName>
    <alternativeName>
        <fullName evidence="1">Glucose-inhibited division protein A</fullName>
    </alternativeName>
</protein>
<evidence type="ECO:0000255" key="1">
    <source>
        <dbReference type="HAMAP-Rule" id="MF_00129"/>
    </source>
</evidence>
<proteinExistence type="inferred from homology"/>